<dbReference type="EC" id="3.1.3.-" evidence="1"/>
<dbReference type="EMBL" id="AE005174">
    <property type="protein sequence ID" value="AAG57383.1"/>
    <property type="molecule type" value="Genomic_DNA"/>
</dbReference>
<dbReference type="EMBL" id="BA000007">
    <property type="protein sequence ID" value="BAB36563.1"/>
    <property type="molecule type" value="Genomic_DNA"/>
</dbReference>
<dbReference type="PIR" id="C85865">
    <property type="entry name" value="C85865"/>
</dbReference>
<dbReference type="PIR" id="D91021">
    <property type="entry name" value="D91021"/>
</dbReference>
<dbReference type="RefSeq" id="NP_311167.1">
    <property type="nucleotide sequence ID" value="NC_002695.1"/>
</dbReference>
<dbReference type="RefSeq" id="WP_001302794.1">
    <property type="nucleotide sequence ID" value="NZ_VOAI01000001.1"/>
</dbReference>
<dbReference type="SMR" id="Q8XDZ8"/>
<dbReference type="STRING" id="155864.Z3510"/>
<dbReference type="GeneID" id="916848"/>
<dbReference type="KEGG" id="ece:Z3510"/>
<dbReference type="KEGG" id="ecs:ECs_3140"/>
<dbReference type="PATRIC" id="fig|386585.9.peg.3276"/>
<dbReference type="eggNOG" id="COG0406">
    <property type="taxonomic scope" value="Bacteria"/>
</dbReference>
<dbReference type="HOGENOM" id="CLU_106705_1_0_6"/>
<dbReference type="OMA" id="NFTVIVW"/>
<dbReference type="UniPathway" id="UPA00451"/>
<dbReference type="Proteomes" id="UP000000558">
    <property type="component" value="Chromosome"/>
</dbReference>
<dbReference type="Proteomes" id="UP000002519">
    <property type="component" value="Chromosome"/>
</dbReference>
<dbReference type="GO" id="GO:0042597">
    <property type="term" value="C:periplasmic space"/>
    <property type="evidence" value="ECO:0007669"/>
    <property type="project" value="UniProtKB-SubCell"/>
</dbReference>
<dbReference type="GO" id="GO:0016791">
    <property type="term" value="F:phosphatase activity"/>
    <property type="evidence" value="ECO:0007669"/>
    <property type="project" value="UniProtKB-UniRule"/>
</dbReference>
<dbReference type="GO" id="GO:0008653">
    <property type="term" value="P:lipopolysaccharide metabolic process"/>
    <property type="evidence" value="ECO:0007669"/>
    <property type="project" value="UniProtKB-UniRule"/>
</dbReference>
<dbReference type="CDD" id="cd07040">
    <property type="entry name" value="HP"/>
    <property type="match status" value="1"/>
</dbReference>
<dbReference type="Gene3D" id="3.40.50.1240">
    <property type="entry name" value="Phosphoglycerate mutase-like"/>
    <property type="match status" value="1"/>
</dbReference>
<dbReference type="HAMAP" id="MF_01868">
    <property type="entry name" value="Ais"/>
    <property type="match status" value="1"/>
</dbReference>
<dbReference type="InterPro" id="IPR013078">
    <property type="entry name" value="His_Pase_superF_clade-1"/>
</dbReference>
<dbReference type="InterPro" id="IPR029033">
    <property type="entry name" value="His_PPase_superfam"/>
</dbReference>
<dbReference type="InterPro" id="IPR011310">
    <property type="entry name" value="LipoPS_heptP_Pase"/>
</dbReference>
<dbReference type="NCBIfam" id="NF011945">
    <property type="entry name" value="PRK15416.1"/>
    <property type="match status" value="1"/>
</dbReference>
<dbReference type="Pfam" id="PF00300">
    <property type="entry name" value="His_Phos_1"/>
    <property type="match status" value="1"/>
</dbReference>
<dbReference type="PIRSF" id="PIRSF011416">
    <property type="entry name" value="Ais-TraG-AfrS"/>
    <property type="match status" value="1"/>
</dbReference>
<dbReference type="SUPFAM" id="SSF53254">
    <property type="entry name" value="Phosphoglycerate mutase-like"/>
    <property type="match status" value="1"/>
</dbReference>
<organism>
    <name type="scientific">Escherichia coli O157:H7</name>
    <dbReference type="NCBI Taxonomy" id="83334"/>
    <lineage>
        <taxon>Bacteria</taxon>
        <taxon>Pseudomonadati</taxon>
        <taxon>Pseudomonadota</taxon>
        <taxon>Gammaproteobacteria</taxon>
        <taxon>Enterobacterales</taxon>
        <taxon>Enterobacteriaceae</taxon>
        <taxon>Escherichia</taxon>
    </lineage>
</organism>
<keyword id="KW-0378">Hydrolase</keyword>
<keyword id="KW-0574">Periplasm</keyword>
<keyword id="KW-1185">Reference proteome</keyword>
<keyword id="KW-0732">Signal</keyword>
<accession>Q8XDZ8</accession>
<accession>Q7AC25</accession>
<reference key="1">
    <citation type="journal article" date="2001" name="Nature">
        <title>Genome sequence of enterohaemorrhagic Escherichia coli O157:H7.</title>
        <authorList>
            <person name="Perna N.T."/>
            <person name="Plunkett G. III"/>
            <person name="Burland V."/>
            <person name="Mau B."/>
            <person name="Glasner J.D."/>
            <person name="Rose D.J."/>
            <person name="Mayhew G.F."/>
            <person name="Evans P.S."/>
            <person name="Gregor J."/>
            <person name="Kirkpatrick H.A."/>
            <person name="Posfai G."/>
            <person name="Hackett J."/>
            <person name="Klink S."/>
            <person name="Boutin A."/>
            <person name="Shao Y."/>
            <person name="Miller L."/>
            <person name="Grotbeck E.J."/>
            <person name="Davis N.W."/>
            <person name="Lim A."/>
            <person name="Dimalanta E.T."/>
            <person name="Potamousis K."/>
            <person name="Apodaca J."/>
            <person name="Anantharaman T.S."/>
            <person name="Lin J."/>
            <person name="Yen G."/>
            <person name="Schwartz D.C."/>
            <person name="Welch R.A."/>
            <person name="Blattner F.R."/>
        </authorList>
    </citation>
    <scope>NUCLEOTIDE SEQUENCE [LARGE SCALE GENOMIC DNA]</scope>
    <source>
        <strain>O157:H7 / EDL933 / ATCC 700927 / EHEC</strain>
    </source>
</reference>
<reference key="2">
    <citation type="journal article" date="2001" name="DNA Res.">
        <title>Complete genome sequence of enterohemorrhagic Escherichia coli O157:H7 and genomic comparison with a laboratory strain K-12.</title>
        <authorList>
            <person name="Hayashi T."/>
            <person name="Makino K."/>
            <person name="Ohnishi M."/>
            <person name="Kurokawa K."/>
            <person name="Ishii K."/>
            <person name="Yokoyama K."/>
            <person name="Han C.-G."/>
            <person name="Ohtsubo E."/>
            <person name="Nakayama K."/>
            <person name="Murata T."/>
            <person name="Tanaka M."/>
            <person name="Tobe T."/>
            <person name="Iida T."/>
            <person name="Takami H."/>
            <person name="Honda T."/>
            <person name="Sasakawa C."/>
            <person name="Ogasawara N."/>
            <person name="Yasunaga T."/>
            <person name="Kuhara S."/>
            <person name="Shiba T."/>
            <person name="Hattori M."/>
            <person name="Shinagawa H."/>
        </authorList>
    </citation>
    <scope>NUCLEOTIDE SEQUENCE [LARGE SCALE GENOMIC DNA]</scope>
    <source>
        <strain>O157:H7 / Sakai / RIMD 0509952 / EHEC</strain>
    </source>
</reference>
<protein>
    <recommendedName>
        <fullName evidence="1">Lipopolysaccharide core heptose(II)-phosphate phosphatase</fullName>
        <ecNumber evidence="1">3.1.3.-</ecNumber>
    </recommendedName>
</protein>
<proteinExistence type="inferred from homology"/>
<sequence>MLAFCRSSLKSKKYFIILLALAAIAGLGTHAAWSSNGLPRIDNKTLGRLAQQHPVVVLFRHAERCDRSTNQCLSDKTGITVKGTQDARELGNAFSADIPDFDLYSSNTVRTIQSATWFSAGKKLTVDKRLLQCGNEIYSAIKDLQSKAPDKNIVIFTHNHCLTYIAKDKRDATFKPDYLDGLVMHVEKGKVYLDGEFVNH</sequence>
<gene>
    <name evidence="1" type="primary">ais</name>
    <name type="ordered locus">Z3510</name>
    <name type="ordered locus">ECs3140</name>
</gene>
<feature type="signal peptide" evidence="1">
    <location>
        <begin position="1"/>
        <end position="25"/>
    </location>
</feature>
<feature type="chain" id="PRO_0000380562" description="Lipopolysaccharide core heptose(II)-phosphate phosphatase">
    <location>
        <begin position="26"/>
        <end position="200"/>
    </location>
</feature>
<name>AIS_ECO57</name>
<evidence type="ECO:0000255" key="1">
    <source>
        <dbReference type="HAMAP-Rule" id="MF_01868"/>
    </source>
</evidence>
<comment type="function">
    <text evidence="1">Catalyzes the dephosphorylation of heptose(II) of the outer membrane lipopolysaccharide core.</text>
</comment>
<comment type="pathway">
    <text evidence="1">Bacterial outer membrane biogenesis; lipopolysaccharide metabolism.</text>
</comment>
<comment type="subcellular location">
    <subcellularLocation>
        <location evidence="1">Periplasm</location>
    </subcellularLocation>
</comment>
<comment type="similarity">
    <text evidence="1">Belongs to the phosphoglycerate mutase family. Ais subfamily.</text>
</comment>